<gene>
    <name type="primary">limA</name>
</gene>
<dbReference type="EC" id="3.3.2.8"/>
<dbReference type="EMBL" id="Y18005">
    <property type="protein sequence ID" value="CAA77012.1"/>
    <property type="molecule type" value="Genomic_DNA"/>
</dbReference>
<dbReference type="EMBL" id="AJ272366">
    <property type="protein sequence ID" value="CAC20854.1"/>
    <property type="molecule type" value="Genomic_DNA"/>
</dbReference>
<dbReference type="PDB" id="1NU3">
    <property type="method" value="X-ray"/>
    <property type="resolution" value="1.75 A"/>
    <property type="chains" value="A/B=1-149"/>
</dbReference>
<dbReference type="PDB" id="1NWW">
    <property type="method" value="X-ray"/>
    <property type="resolution" value="1.20 A"/>
    <property type="chains" value="A/B=1-149"/>
</dbReference>
<dbReference type="PDB" id="4R9K">
    <property type="method" value="X-ray"/>
    <property type="resolution" value="1.50 A"/>
    <property type="chains" value="A/B/C=3-149"/>
</dbReference>
<dbReference type="PDB" id="4R9L">
    <property type="method" value="X-ray"/>
    <property type="resolution" value="1.80 A"/>
    <property type="chains" value="A/B/C=3-149"/>
</dbReference>
<dbReference type="PDB" id="4XBT">
    <property type="method" value="X-ray"/>
    <property type="resolution" value="1.70 A"/>
    <property type="chains" value="A/B/C/D=2-149"/>
</dbReference>
<dbReference type="PDB" id="4XBX">
    <property type="method" value="X-ray"/>
    <property type="resolution" value="1.53 A"/>
    <property type="chains" value="A/B/C/D=2-149"/>
</dbReference>
<dbReference type="PDB" id="4XBY">
    <property type="method" value="X-ray"/>
    <property type="resolution" value="2.30 A"/>
    <property type="chains" value="A/B/C/D/E/F/G/H=5-149"/>
</dbReference>
<dbReference type="PDB" id="4XDV">
    <property type="method" value="X-ray"/>
    <property type="resolution" value="2.25 A"/>
    <property type="chains" value="A/B/C/D/E/F/G/H=5-149"/>
</dbReference>
<dbReference type="PDB" id="4XDW">
    <property type="method" value="X-ray"/>
    <property type="resolution" value="2.05 A"/>
    <property type="chains" value="A/B/C/D/E/F/G/H=5-149"/>
</dbReference>
<dbReference type="PDB" id="5CF1">
    <property type="method" value="X-ray"/>
    <property type="resolution" value="2.24 A"/>
    <property type="chains" value="A/B/C/D/E/F/G/H=2-149"/>
</dbReference>
<dbReference type="PDB" id="5CF2">
    <property type="method" value="X-ray"/>
    <property type="resolution" value="3.00 A"/>
    <property type="chains" value="A/B/C/D=2-149"/>
</dbReference>
<dbReference type="PDB" id="5CK6">
    <property type="method" value="X-ray"/>
    <property type="resolution" value="2.50 A"/>
    <property type="chains" value="A/B=2-149"/>
</dbReference>
<dbReference type="PDB" id="5CLK">
    <property type="method" value="X-ray"/>
    <property type="resolution" value="2.70 A"/>
    <property type="chains" value="A/B=2-149"/>
</dbReference>
<dbReference type="PDB" id="5GKW">
    <property type="method" value="X-ray"/>
    <property type="resolution" value="2.01 A"/>
    <property type="chains" value="A/B=2-149"/>
</dbReference>
<dbReference type="PDB" id="5JPP">
    <property type="method" value="X-ray"/>
    <property type="resolution" value="2.50 A"/>
    <property type="chains" value="A/B=2-149"/>
</dbReference>
<dbReference type="PDB" id="5JPU">
    <property type="method" value="X-ray"/>
    <property type="resolution" value="1.50 A"/>
    <property type="chains" value="A/B=2-149"/>
</dbReference>
<dbReference type="PDB" id="5YAO">
    <property type="method" value="X-ray"/>
    <property type="resolution" value="2.61 A"/>
    <property type="chains" value="A/B=2-149"/>
</dbReference>
<dbReference type="PDB" id="5YNG">
    <property type="method" value="X-ray"/>
    <property type="resolution" value="2.50 A"/>
    <property type="chains" value="A/B=2-149"/>
</dbReference>
<dbReference type="PDB" id="5YQT">
    <property type="method" value="X-ray"/>
    <property type="resolution" value="2.30 A"/>
    <property type="chains" value="A/B/C/D/E/F/G/H=5-149"/>
</dbReference>
<dbReference type="PDB" id="7VWD">
    <property type="method" value="X-ray"/>
    <property type="resolution" value="2.15 A"/>
    <property type="chains" value="A/B/C/D=2-149"/>
</dbReference>
<dbReference type="PDB" id="7VWM">
    <property type="method" value="X-ray"/>
    <property type="resolution" value="1.98 A"/>
    <property type="chains" value="A/B/C/D=2-149"/>
</dbReference>
<dbReference type="PDB" id="7VX2">
    <property type="method" value="X-ray"/>
    <property type="resolution" value="2.48 A"/>
    <property type="chains" value="A/B/C/D=2-149"/>
</dbReference>
<dbReference type="PDB" id="7XEE">
    <property type="method" value="X-ray"/>
    <property type="resolution" value="1.88 A"/>
    <property type="chains" value="A/B=2-149"/>
</dbReference>
<dbReference type="PDB" id="7XEF">
    <property type="method" value="X-ray"/>
    <property type="resolution" value="1.82 A"/>
    <property type="chains" value="A/B/C/D=2-149"/>
</dbReference>
<dbReference type="PDBsum" id="1NU3"/>
<dbReference type="PDBsum" id="1NWW"/>
<dbReference type="PDBsum" id="4R9K"/>
<dbReference type="PDBsum" id="4R9L"/>
<dbReference type="PDBsum" id="4XBT"/>
<dbReference type="PDBsum" id="4XBX"/>
<dbReference type="PDBsum" id="4XBY"/>
<dbReference type="PDBsum" id="4XDV"/>
<dbReference type="PDBsum" id="4XDW"/>
<dbReference type="PDBsum" id="5CF1"/>
<dbReference type="PDBsum" id="5CF2"/>
<dbReference type="PDBsum" id="5CK6"/>
<dbReference type="PDBsum" id="5CLK"/>
<dbReference type="PDBsum" id="5GKW"/>
<dbReference type="PDBsum" id="5JPP"/>
<dbReference type="PDBsum" id="5JPU"/>
<dbReference type="PDBsum" id="5YAO"/>
<dbReference type="PDBsum" id="5YNG"/>
<dbReference type="PDBsum" id="5YQT"/>
<dbReference type="PDBsum" id="7VWD"/>
<dbReference type="PDBsum" id="7VWM"/>
<dbReference type="PDBsum" id="7VX2"/>
<dbReference type="PDBsum" id="7XEE"/>
<dbReference type="PDBsum" id="7XEF"/>
<dbReference type="SMR" id="Q9ZAG3"/>
<dbReference type="DrugBank" id="DB03814">
    <property type="generic name" value="2-(N-morpholino)ethanesulfonic acid"/>
</dbReference>
<dbReference type="DrugBank" id="DB02641">
    <property type="generic name" value="Heptanamide"/>
</dbReference>
<dbReference type="DrugBank" id="DB04165">
    <property type="generic name" value="Valpromide"/>
</dbReference>
<dbReference type="KEGG" id="ag:CAA77012"/>
<dbReference type="BioCyc" id="MetaCyc:MONOMER-13975"/>
<dbReference type="BRENDA" id="3.3.2.8">
    <property type="organism ID" value="5389"/>
</dbReference>
<dbReference type="SABIO-RK" id="Q9ZAG3"/>
<dbReference type="UniPathway" id="UPA00987">
    <property type="reaction ID" value="UER00865"/>
</dbReference>
<dbReference type="EvolutionaryTrace" id="Q9ZAG3"/>
<dbReference type="GO" id="GO:0018744">
    <property type="term" value="F:limonene-1,2-epoxide hydrolase activity"/>
    <property type="evidence" value="ECO:0007669"/>
    <property type="project" value="UniProtKB-EC"/>
</dbReference>
<dbReference type="Gene3D" id="3.10.450.50">
    <property type="match status" value="1"/>
</dbReference>
<dbReference type="InterPro" id="IPR013100">
    <property type="entry name" value="LEH"/>
</dbReference>
<dbReference type="InterPro" id="IPR032710">
    <property type="entry name" value="NTF2-like_dom_sf"/>
</dbReference>
<dbReference type="Pfam" id="PF07858">
    <property type="entry name" value="LEH"/>
    <property type="match status" value="1"/>
</dbReference>
<dbReference type="SUPFAM" id="SSF54427">
    <property type="entry name" value="NTF2-like"/>
    <property type="match status" value="1"/>
</dbReference>
<accession>Q9ZAG3</accession>
<keyword id="KW-0002">3D-structure</keyword>
<keyword id="KW-0903">Direct protein sequencing</keyword>
<keyword id="KW-0378">Hydrolase</keyword>
<evidence type="ECO:0000269" key="1">
    <source>
    </source>
</evidence>
<evidence type="ECO:0000269" key="2">
    <source>
    </source>
</evidence>
<evidence type="ECO:0000305" key="3"/>
<evidence type="ECO:0007829" key="4">
    <source>
        <dbReference type="PDB" id="1NWW"/>
    </source>
</evidence>
<evidence type="ECO:0007829" key="5">
    <source>
        <dbReference type="PDB" id="4R9L"/>
    </source>
</evidence>
<evidence type="ECO:0007829" key="6">
    <source>
        <dbReference type="PDB" id="5CF2"/>
    </source>
</evidence>
<organism>
    <name type="scientific">Rhodococcus erythropolis</name>
    <name type="common">Arthrobacter picolinophilus</name>
    <dbReference type="NCBI Taxonomy" id="1833"/>
    <lineage>
        <taxon>Bacteria</taxon>
        <taxon>Bacillati</taxon>
        <taxon>Actinomycetota</taxon>
        <taxon>Actinomycetes</taxon>
        <taxon>Mycobacteriales</taxon>
        <taxon>Nocardiaceae</taxon>
        <taxon>Rhodococcus</taxon>
        <taxon>Rhodococcus erythropolis group</taxon>
    </lineage>
</organism>
<feature type="initiator methionine" description="Removed" evidence="2">
    <location>
        <position position="1"/>
    </location>
</feature>
<feature type="chain" id="PRO_0000084422" description="Limonene-1,2-epoxide hydrolase">
    <location>
        <begin position="2"/>
        <end position="149"/>
    </location>
</feature>
<feature type="active site" description="Proton donor" evidence="3">
    <location>
        <position position="101"/>
    </location>
</feature>
<feature type="active site" description="Proton acceptor" evidence="3">
    <location>
        <position position="132"/>
    </location>
</feature>
<feature type="mutagenesis site" description="15% of wild-type catalytic efficiency." evidence="1">
    <original>Y</original>
    <variation>F</variation>
    <location>
        <position position="53"/>
    </location>
</feature>
<feature type="mutagenesis site" description="Almost no activity." evidence="1">
    <original>N</original>
    <variation>A</variation>
    <location>
        <position position="55"/>
    </location>
</feature>
<feature type="mutagenesis site" description="No activity." evidence="1">
    <original>N</original>
    <variation>D</variation>
    <location>
        <position position="55"/>
    </location>
</feature>
<feature type="mutagenesis site" description="Impaired protein folding and no activity." evidence="1">
    <original>R</original>
    <variation>A</variation>
    <variation>H</variation>
    <variation>K</variation>
    <variation>Q</variation>
    <location>
        <position position="99"/>
    </location>
</feature>
<feature type="mutagenesis site" description="No activity." evidence="1">
    <original>D</original>
    <variation>A</variation>
    <variation>N</variation>
    <location>
        <position position="101"/>
    </location>
</feature>
<feature type="mutagenesis site" description="No activity." evidence="1">
    <original>D</original>
    <variation>A</variation>
    <variation>N</variation>
    <location>
        <position position="132"/>
    </location>
</feature>
<feature type="strand" evidence="6">
    <location>
        <begin position="9"/>
        <end position="11"/>
    </location>
</feature>
<feature type="turn" evidence="4">
    <location>
        <begin position="15"/>
        <end position="18"/>
    </location>
</feature>
<feature type="helix" evidence="4">
    <location>
        <begin position="23"/>
        <end position="34"/>
    </location>
</feature>
<feature type="helix" evidence="4">
    <location>
        <begin position="35"/>
        <end position="37"/>
    </location>
</feature>
<feature type="helix" evidence="4">
    <location>
        <begin position="40"/>
        <end position="44"/>
    </location>
</feature>
<feature type="strand" evidence="4">
    <location>
        <begin position="52"/>
        <end position="55"/>
    </location>
</feature>
<feature type="strand" evidence="4">
    <location>
        <begin position="61"/>
        <end position="63"/>
    </location>
</feature>
<feature type="helix" evidence="4">
    <location>
        <begin position="64"/>
        <end position="77"/>
    </location>
</feature>
<feature type="strand" evidence="4">
    <location>
        <begin position="78"/>
        <end position="91"/>
    </location>
</feature>
<feature type="strand" evidence="4">
    <location>
        <begin position="94"/>
        <end position="105"/>
    </location>
</feature>
<feature type="turn" evidence="4">
    <location>
        <begin position="106"/>
        <end position="108"/>
    </location>
</feature>
<feature type="strand" evidence="4">
    <location>
        <begin position="111"/>
        <end position="123"/>
    </location>
</feature>
<feature type="strand" evidence="4">
    <location>
        <begin position="126"/>
        <end position="133"/>
    </location>
</feature>
<feature type="helix" evidence="4">
    <location>
        <begin position="136"/>
        <end position="143"/>
    </location>
</feature>
<feature type="turn" evidence="5">
    <location>
        <begin position="147"/>
        <end position="149"/>
    </location>
</feature>
<comment type="function">
    <text>Catalyzes the conversion of limonene-1,2-epoxide to limonene-1,2-diol. Can use both the (-) and (+) isomers of limonene-1,2-epoxide as substrates and also has some activity with 1-methylcyclohexene oxide, cyclohexene oxide and indene oxide as substrates.</text>
</comment>
<comment type="catalytic activity">
    <reaction evidence="2">
        <text>limonene 1,2-epoxide + H2O = limonene-1,2-diol</text>
        <dbReference type="Rhea" id="RHEA:10700"/>
        <dbReference type="ChEBI" id="CHEBI:15377"/>
        <dbReference type="ChEBI" id="CHEBI:16431"/>
        <dbReference type="ChEBI" id="CHEBI:17219"/>
        <dbReference type="EC" id="3.3.2.8"/>
    </reaction>
</comment>
<comment type="biophysicochemical properties">
    <phDependence>
        <text evidence="2">Optimum pH is 7.</text>
    </phDependence>
    <temperatureDependence>
        <text evidence="2">Optimum temperature is 50 degrees Celsius.</text>
    </temperatureDependence>
</comment>
<comment type="pathway">
    <text>Terpene metabolism; (4R)-limonene degradation; (1S,4R)-1-hydroxylimonen-2-one from (4R)-limonene: step 2/3.</text>
</comment>
<comment type="subunit">
    <text evidence="1 2">Monomer.</text>
</comment>
<comment type="induction">
    <text>By growth on monoterpenes.</text>
</comment>
<comment type="similarity">
    <text evidence="3">Belongs to the limonene-1,2-epoxide hydrolase family.</text>
</comment>
<sequence length="149" mass="16521">MTSKIEQPRWASKDSAAGAASTPDEKIVLEFMDALTSNDAAKLIEYFAEDTMYQNMPLPPAYGRDAVEQTLAGLFTVMSIDAVETFHIGSSNGLVYTERVDVLRALPTGKSYNLSILGVFQLTEGKITGWRDYFDLREFEEAVDLPLRG</sequence>
<reference key="1">
    <citation type="journal article" date="1998" name="FEBS Lett.">
        <title>The Rhodococcus erythropolis DCL14 limonene-1,2-epoxide hydrolase gene encodes an enzyme belonging to a novel class of epoxide hydrolases.</title>
        <authorList>
            <person name="Barbirato F."/>
            <person name="Verdoes J.C."/>
            <person name="de Bont J.A.M."/>
            <person name="van der Werf M.J."/>
        </authorList>
    </citation>
    <scope>NUCLEOTIDE SEQUENCE [GENOMIC DNA]</scope>
    <source>
        <strain>DCL 14</strain>
    </source>
</reference>
<reference key="2">
    <citation type="submission" date="2000-07" db="EMBL/GenBank/DDBJ databases">
        <title>Genetic analysis of the lim operon of Rhodococcus erythropolis DCL14.</title>
        <authorList>
            <person name="Van der Vlugt-Bergmans C.J.B."/>
            <person name="van der Werf M.J."/>
        </authorList>
    </citation>
    <scope>NUCLEOTIDE SEQUENCE [GENOMIC DNA]</scope>
    <source>
        <strain>DCL 14</strain>
    </source>
</reference>
<reference key="3">
    <citation type="journal article" date="1998" name="J. Bacteriol.">
        <title>Limonene-1,2-epoxide hydrolase from Rhodococcus erythropolis DCL14 belongs to a novel class of epoxide hydrolases.</title>
        <authorList>
            <person name="van der Werf M.J."/>
            <person name="Overkamp K.M."/>
            <person name="de Bont J.A.M."/>
        </authorList>
    </citation>
    <scope>PROTEIN SEQUENCE OF 2-51</scope>
    <scope>CATALYTIC ACTIVITY</scope>
    <scope>BIOPHYSICOCHEMICAL PROPERTIES</scope>
    <scope>SUBUNIT</scope>
</reference>
<reference key="4">
    <citation type="journal article" date="2003" name="EMBO J.">
        <title>Structure of Rhodococcus erythropolis limonene-1,2-epoxide hydrolase reveals a novel active site.</title>
        <authorList>
            <person name="Arand M."/>
            <person name="Hallberg B.M."/>
            <person name="Zou J."/>
            <person name="Bergfors T."/>
            <person name="Oesch F."/>
            <person name="van der Werf M.J."/>
            <person name="de Bont J.A."/>
            <person name="Jones T.A."/>
            <person name="Mowbray S.L."/>
        </authorList>
    </citation>
    <scope>X-RAY CRYSTALLOGRAPHY (1.2 ANGSTROMS) IN COMPLEX WITH INHIBITOR</scope>
    <scope>MUTAGENESIS OF TYR-53; ASN-55; ARG-99; ASP-101 AND ASP-132</scope>
    <scope>PUTATIVE REACTION MECHANISM</scope>
</reference>
<name>LIMA_RHOER</name>
<protein>
    <recommendedName>
        <fullName>Limonene-1,2-epoxide hydrolase</fullName>
        <ecNumber>3.3.2.8</ecNumber>
    </recommendedName>
</protein>
<proteinExistence type="evidence at protein level"/>